<comment type="function">
    <text>Paramyosin is a major structural component of many thick filaments isolated from invertebrate muscles.</text>
</comment>
<comment type="subunit">
    <text evidence="1">Homodimer.</text>
</comment>
<comment type="subcellular location">
    <subcellularLocation>
        <location>Cytoplasm</location>
        <location>Myofibril</location>
    </subcellularLocation>
    <text>Thick filaments of the myofibrils.</text>
</comment>
<comment type="developmental stage">
    <text>May be incorporated into the tegument during the development of schistosomula, thus becoming a target for protective immunity during the migratory phase of the parasite.</text>
</comment>
<comment type="similarity">
    <text evidence="3">Belongs to the paramyosin family.</text>
</comment>
<protein>
    <recommendedName>
        <fullName>Paramyosin</fullName>
    </recommendedName>
    <alternativeName>
        <fullName>Antigen Sj97</fullName>
    </alternativeName>
</protein>
<evidence type="ECO:0000250" key="1"/>
<evidence type="ECO:0000255" key="2"/>
<evidence type="ECO:0000305" key="3"/>
<name>MYSP_SCHJA</name>
<proteinExistence type="evidence at transcript level"/>
<feature type="chain" id="PRO_0000211256" description="Paramyosin">
    <location>
        <begin position="1"/>
        <end position="866"/>
    </location>
</feature>
<feature type="region of interest" description="Nonhelical region" evidence="2">
    <location>
        <begin position="1"/>
        <end position="22"/>
    </location>
</feature>
<feature type="region of interest" description="Nonhelical region" evidence="2">
    <location>
        <begin position="840"/>
        <end position="866"/>
    </location>
</feature>
<feature type="coiled-coil region" evidence="2">
    <location>
        <begin position="23"/>
        <end position="839"/>
    </location>
</feature>
<feature type="disulfide bond" description="Interchain" evidence="2">
    <location>
        <position position="750"/>
    </location>
</feature>
<feature type="sequence variant" description="In strain: Chinese.">
    <original>V</original>
    <variation>I</variation>
    <location>
        <position position="567"/>
    </location>
</feature>
<feature type="sequence variant" description="In strain: Chinese.">
    <original>F</original>
    <variation>Y</variation>
    <location>
        <position position="720"/>
    </location>
</feature>
<feature type="sequence conflict" description="In Ref. 1; AAA81003." evidence="3" ref="1">
    <original>E</original>
    <variation>D</variation>
    <location>
        <position position="371"/>
    </location>
</feature>
<feature type="sequence conflict" description="In Ref. 4." evidence="3" ref="4">
    <original>E</original>
    <variation>K</variation>
    <location>
        <position position="559"/>
    </location>
</feature>
<reference key="1">
    <citation type="journal article" date="1995" name="Acta Trop.">
        <title>Gene cloning and complete nucleotide sequence of Philippine Schistosoma japonicum paramyosin.</title>
        <authorList>
            <person name="Becker M.M."/>
            <person name="Kalinna B.H."/>
            <person name="Yang W."/>
            <person name="Harrop S.A."/>
            <person name="Scott J.C."/>
            <person name="Waine G.J."/>
            <person name="Kurtis J.D."/>
            <person name="McManus D.P."/>
        </authorList>
    </citation>
    <scope>NUCLEOTIDE SEQUENCE [MRNA]</scope>
    <source>
        <strain>Philippines</strain>
    </source>
</reference>
<reference key="2">
    <citation type="journal article" date="1994" name="Int. Immunol.">
        <title>Demonstration of the target molecule of a protective IgE antibody in secretory glands of Schistosoma japonicum larvae.</title>
        <authorList>
            <person name="Nara T."/>
            <person name="Matsumoto N."/>
            <person name="Janecharut T."/>
            <person name="Matsuda H."/>
            <person name="Yamamoto K."/>
            <person name="Iimura T."/>
            <person name="Nakamura K.I."/>
            <person name="Aikawa M."/>
            <person name="Oswald I."/>
            <person name="Sher A."/>
            <person name="Kita K."/>
            <person name="Kojima S."/>
        </authorList>
    </citation>
    <scope>NUCLEOTIDE SEQUENCE [MRNA]</scope>
    <source>
        <strain>Japanese</strain>
    </source>
</reference>
<reference key="3">
    <citation type="journal article" date="2000" name="Vaccine">
        <title>Protective immunity induced by the full-length cDNA encoding paramyosin of Chinese Schistosoma japonicum.</title>
        <authorList>
            <person name="Zhou S.-H."/>
            <person name="Liu S.-X."/>
            <person name="Song G.-C."/>
            <person name="Xu Y.-X."/>
            <person name="Sun W."/>
        </authorList>
    </citation>
    <scope>NUCLEOTIDE SEQUENCE [MRNA]</scope>
    <source>
        <strain>Chinese</strain>
    </source>
</reference>
<reference key="4">
    <citation type="journal article" date="1992" name="Int. J. Parasitol.">
        <title>Cloning and partial nucleotide sequence of Schistosoma japonicum paramyosin: a potential vaccine candidate against schistosomiasis.</title>
        <authorList>
            <person name="Yang W."/>
            <person name="Waine G.J."/>
            <person name="Sculley D.G."/>
            <person name="Liu X."/>
            <person name="McManus D.P."/>
        </authorList>
    </citation>
    <scope>NUCLEOTIDE SEQUENCE [MRNA] OF 171-559</scope>
</reference>
<organism>
    <name type="scientific">Schistosoma japonicum</name>
    <name type="common">Blood fluke</name>
    <dbReference type="NCBI Taxonomy" id="6182"/>
    <lineage>
        <taxon>Eukaryota</taxon>
        <taxon>Metazoa</taxon>
        <taxon>Spiralia</taxon>
        <taxon>Lophotrochozoa</taxon>
        <taxon>Platyhelminthes</taxon>
        <taxon>Trematoda</taxon>
        <taxon>Digenea</taxon>
        <taxon>Strigeidida</taxon>
        <taxon>Schistosomatoidea</taxon>
        <taxon>Schistosomatidae</taxon>
        <taxon>Schistosoma</taxon>
    </lineage>
</organism>
<sequence length="866" mass="100542">MMNHDTESHVKISRTIYRGVSPSTTRLESRVRELEDILDLERDARVRAERHAADLSYQVDALSERLDEAGGSTTQTQELLKRREMEINKLRKDLENANASLELAETSMRRRHQTALNELSLEVENLQKQKGKAEKDKSHLIMEVDNVLGQLDGALKAKQSAESKLEGLDSQLNRLKTLTDDLQRQLTELNNAKSRLTSENFELLHINQDYEAQILNYSKAKSSLESQVDDLKRSLDDESRNRFNLQAQLTSLQMDYDNLQAKYDEESEEASNLRNQVSKFNADIAALKSKFERELMSKTEEFEEMKRKLTMRITELEDVAERERLKAVSLEKLKTKLTLEIKDLQSEIESLSLENGELIRRAKSAESLASELQRRVDELTIEVNTLTSQNNQLESENMRLKSLVNDLTDKNNALERENRQMNDQVKELKSSLRDANRRLTDLEALRSQLEAERDNLASALHDAEEALRDMDQKYQASQAALNHLKSEMEQRLRERDEELESLRKSTTRTIEELTVTITEMEVKYKSELSRLKKRYESSIADLEIQLDATNKANANLMKENKNLAQRVKDLETFLDDERRLREAAENNLQITEHKRIQLANEVEELRSAMENLERLRKHAETELEETQSRVSELTIQVNTLSNDKRRLEGDIGVMQADMDDAINAKQAAEDRATRLNNEVLRLADELRQEQENYKHAEALRKQLEIEIREITVKLEEAEAFATREGRRMVQKLQARVRELEAEFDGESRRCKDALAQARKFERQYKELQTQAEDDRRMVLELQDLLDKTQMKMKAYKRQLEEMEEVSQITMNKYRKAQQQIEEAEHRADMAERTVTVRRVGPGGRAVSVARELSVTSNRGMRATSMM</sequence>
<keyword id="KW-0175">Coiled coil</keyword>
<keyword id="KW-0963">Cytoplasm</keyword>
<keyword id="KW-1015">Disulfide bond</keyword>
<keyword id="KW-0505">Motor protein</keyword>
<keyword id="KW-0514">Muscle protein</keyword>
<keyword id="KW-0518">Myosin</keyword>
<keyword id="KW-0787">Thick filament</keyword>
<dbReference type="EMBL" id="U11825">
    <property type="protein sequence ID" value="AAA81003.1"/>
    <property type="molecule type" value="mRNA"/>
</dbReference>
<dbReference type="EMBL" id="D28811">
    <property type="protein sequence ID" value="BAA05972.1"/>
    <property type="molecule type" value="mRNA"/>
</dbReference>
<dbReference type="EMBL" id="AF113971">
    <property type="protein sequence ID" value="AAD29285.1"/>
    <property type="molecule type" value="mRNA"/>
</dbReference>
<dbReference type="EMBL" id="M90492">
    <property type="status" value="NOT_ANNOTATED_CDS"/>
    <property type="molecule type" value="mRNA"/>
</dbReference>
<dbReference type="SMR" id="Q05870"/>
<dbReference type="GO" id="GO:0030016">
    <property type="term" value="C:myofibril"/>
    <property type="evidence" value="ECO:0007669"/>
    <property type="project" value="UniProtKB-SubCell"/>
</dbReference>
<dbReference type="GO" id="GO:0016459">
    <property type="term" value="C:myosin complex"/>
    <property type="evidence" value="ECO:0007669"/>
    <property type="project" value="UniProtKB-KW"/>
</dbReference>
<dbReference type="GO" id="GO:0032982">
    <property type="term" value="C:myosin filament"/>
    <property type="evidence" value="ECO:0007669"/>
    <property type="project" value="UniProtKB-KW"/>
</dbReference>
<dbReference type="Gene3D" id="1.20.5.340">
    <property type="match status" value="4"/>
</dbReference>
<dbReference type="Gene3D" id="1.20.5.370">
    <property type="match status" value="1"/>
</dbReference>
<dbReference type="Gene3D" id="1.20.5.1160">
    <property type="entry name" value="Vasodilator-stimulated phosphoprotein"/>
    <property type="match status" value="1"/>
</dbReference>
<dbReference type="InterPro" id="IPR002928">
    <property type="entry name" value="Myosin_tail"/>
</dbReference>
<dbReference type="InterPro" id="IPR014751">
    <property type="entry name" value="XRCC4-like_C"/>
</dbReference>
<dbReference type="PANTHER" id="PTHR46349">
    <property type="entry name" value="CINGULIN-LIKE PROTEIN 1-RELATED"/>
    <property type="match status" value="1"/>
</dbReference>
<dbReference type="PANTHER" id="PTHR46349:SF6">
    <property type="entry name" value="MYOSIN-6-LIKE"/>
    <property type="match status" value="1"/>
</dbReference>
<dbReference type="Pfam" id="PF01576">
    <property type="entry name" value="Myosin_tail_1"/>
    <property type="match status" value="1"/>
</dbReference>
<dbReference type="SUPFAM" id="SSF90257">
    <property type="entry name" value="Myosin rod fragments"/>
    <property type="match status" value="3"/>
</dbReference>
<dbReference type="SUPFAM" id="SSF57997">
    <property type="entry name" value="Tropomyosin"/>
    <property type="match status" value="1"/>
</dbReference>
<accession>Q05870</accession>
<accession>Q26510</accession>
<accession>Q26518</accession>
<accession>Q9UAS3</accession>